<organism>
    <name type="scientific">Escherichia coli (strain UTI89 / UPEC)</name>
    <dbReference type="NCBI Taxonomy" id="364106"/>
    <lineage>
        <taxon>Bacteria</taxon>
        <taxon>Pseudomonadati</taxon>
        <taxon>Pseudomonadota</taxon>
        <taxon>Gammaproteobacteria</taxon>
        <taxon>Enterobacterales</taxon>
        <taxon>Enterobacteriaceae</taxon>
        <taxon>Escherichia</taxon>
    </lineage>
</organism>
<evidence type="ECO:0000255" key="1">
    <source>
        <dbReference type="HAMAP-Rule" id="MF_01523"/>
    </source>
</evidence>
<evidence type="ECO:0000305" key="2"/>
<accession>Q1R5B9</accession>
<protein>
    <recommendedName>
        <fullName evidence="1">Ribosomal RNA small subunit methyltransferase J</fullName>
        <ecNumber evidence="1">2.1.1.242</ecNumber>
    </recommendedName>
    <alternativeName>
        <fullName evidence="1">16S rRNA m2G1516 methyltransferase</fullName>
    </alternativeName>
    <alternativeName>
        <fullName evidence="1">rRNA (guanine-N(2)-)-methyltransferase</fullName>
    </alternativeName>
</protein>
<reference key="1">
    <citation type="journal article" date="2006" name="Proc. Natl. Acad. Sci. U.S.A.">
        <title>Identification of genes subject to positive selection in uropathogenic strains of Escherichia coli: a comparative genomics approach.</title>
        <authorList>
            <person name="Chen S.L."/>
            <person name="Hung C.-S."/>
            <person name="Xu J."/>
            <person name="Reigstad C.S."/>
            <person name="Magrini V."/>
            <person name="Sabo A."/>
            <person name="Blasiar D."/>
            <person name="Bieri T."/>
            <person name="Meyer R.R."/>
            <person name="Ozersky P."/>
            <person name="Armstrong J.R."/>
            <person name="Fulton R.S."/>
            <person name="Latreille J.P."/>
            <person name="Spieth J."/>
            <person name="Hooton T.M."/>
            <person name="Mardis E.R."/>
            <person name="Hultgren S.J."/>
            <person name="Gordon J.I."/>
        </authorList>
    </citation>
    <scope>NUCLEOTIDE SEQUENCE [LARGE SCALE GENOMIC DNA]</scope>
    <source>
        <strain>UTI89 / UPEC</strain>
    </source>
</reference>
<keyword id="KW-0963">Cytoplasm</keyword>
<keyword id="KW-0489">Methyltransferase</keyword>
<keyword id="KW-0698">rRNA processing</keyword>
<keyword id="KW-0949">S-adenosyl-L-methionine</keyword>
<keyword id="KW-0808">Transferase</keyword>
<comment type="function">
    <text evidence="1">Specifically methylates the guanosine in position 1516 of 16S rRNA.</text>
</comment>
<comment type="catalytic activity">
    <reaction evidence="1">
        <text>guanosine(1516) in 16S rRNA + S-adenosyl-L-methionine = N(2)-methylguanosine(1516) in 16S rRNA + S-adenosyl-L-homocysteine + H(+)</text>
        <dbReference type="Rhea" id="RHEA:43220"/>
        <dbReference type="Rhea" id="RHEA-COMP:10412"/>
        <dbReference type="Rhea" id="RHEA-COMP:10413"/>
        <dbReference type="ChEBI" id="CHEBI:15378"/>
        <dbReference type="ChEBI" id="CHEBI:57856"/>
        <dbReference type="ChEBI" id="CHEBI:59789"/>
        <dbReference type="ChEBI" id="CHEBI:74269"/>
        <dbReference type="ChEBI" id="CHEBI:74481"/>
        <dbReference type="EC" id="2.1.1.242"/>
    </reaction>
</comment>
<comment type="subcellular location">
    <subcellularLocation>
        <location evidence="1">Cytoplasm</location>
    </subcellularLocation>
</comment>
<comment type="similarity">
    <text evidence="1">Belongs to the methyltransferase superfamily. RsmJ family.</text>
</comment>
<comment type="sequence caution" evidence="2">
    <conflict type="erroneous initiation">
        <sequence resource="EMBL-CDS" id="ABE09445"/>
    </conflict>
    <text>Extended N-terminus.</text>
</comment>
<gene>
    <name evidence="1" type="primary">rsmJ</name>
    <name type="synonym">yhiQ</name>
    <name type="ordered locus">UTI89_C4016</name>
</gene>
<sequence>MKICLIDETGAGDGALSVLAARWGLEHDEDNLMALVLTPEHLELRKRDEPKLGGIFVDFVGGAMAHRRKFGGGRGEAVAKAVGIKGDYLPDVVDATAGLGRDAFVLASVGCRVRMLERNPVVAALLDDGLARGYADAEIGGWLQERLQLIHASSLTALSDITPRPQVVCLDPMFPHKQKSALVKKEMRVFQSLVGPDLDADGLLEPARLLATKRVVVKRPDYAPPLANVATPNAVVTKGHRFDIYAGTPV</sequence>
<proteinExistence type="inferred from homology"/>
<name>RSMJ_ECOUT</name>
<feature type="chain" id="PRO_0000292627" description="Ribosomal RNA small subunit methyltransferase J">
    <location>
        <begin position="1"/>
        <end position="250"/>
    </location>
</feature>
<feature type="binding site" evidence="1">
    <location>
        <begin position="101"/>
        <end position="102"/>
    </location>
    <ligand>
        <name>S-adenosyl-L-methionine</name>
        <dbReference type="ChEBI" id="CHEBI:59789"/>
    </ligand>
</feature>
<feature type="binding site" evidence="1">
    <location>
        <begin position="117"/>
        <end position="118"/>
    </location>
    <ligand>
        <name>S-adenosyl-L-methionine</name>
        <dbReference type="ChEBI" id="CHEBI:59789"/>
    </ligand>
</feature>
<feature type="binding site" evidence="1">
    <location>
        <begin position="153"/>
        <end position="154"/>
    </location>
    <ligand>
        <name>S-adenosyl-L-methionine</name>
        <dbReference type="ChEBI" id="CHEBI:59789"/>
    </ligand>
</feature>
<feature type="binding site" evidence="1">
    <location>
        <position position="171"/>
    </location>
    <ligand>
        <name>S-adenosyl-L-methionine</name>
        <dbReference type="ChEBI" id="CHEBI:59789"/>
    </ligand>
</feature>
<dbReference type="EC" id="2.1.1.242" evidence="1"/>
<dbReference type="EMBL" id="CP000243">
    <property type="protein sequence ID" value="ABE09445.1"/>
    <property type="status" value="ALT_INIT"/>
    <property type="molecule type" value="Genomic_DNA"/>
</dbReference>
<dbReference type="RefSeq" id="WP_000686605.1">
    <property type="nucleotide sequence ID" value="NZ_CP064825.1"/>
</dbReference>
<dbReference type="SMR" id="Q1R5B9"/>
<dbReference type="KEGG" id="eci:UTI89_C4016"/>
<dbReference type="HOGENOM" id="CLU_076324_0_0_6"/>
<dbReference type="Proteomes" id="UP000001952">
    <property type="component" value="Chromosome"/>
</dbReference>
<dbReference type="GO" id="GO:0005737">
    <property type="term" value="C:cytoplasm"/>
    <property type="evidence" value="ECO:0007669"/>
    <property type="project" value="UniProtKB-SubCell"/>
</dbReference>
<dbReference type="GO" id="GO:0008990">
    <property type="term" value="F:rRNA (guanine-N2-)-methyltransferase activity"/>
    <property type="evidence" value="ECO:0007669"/>
    <property type="project" value="UniProtKB-UniRule"/>
</dbReference>
<dbReference type="CDD" id="cd02440">
    <property type="entry name" value="AdoMet_MTases"/>
    <property type="match status" value="1"/>
</dbReference>
<dbReference type="FunFam" id="3.40.1630.10:FF:000001">
    <property type="entry name" value="Ribosomal RNA small subunit methyltransferase J"/>
    <property type="match status" value="1"/>
</dbReference>
<dbReference type="FunFam" id="3.40.50.150:FF:000072">
    <property type="entry name" value="Ribosomal RNA small subunit methyltransferase J"/>
    <property type="match status" value="1"/>
</dbReference>
<dbReference type="Gene3D" id="3.40.50.150">
    <property type="entry name" value="Vaccinia Virus protein VP39"/>
    <property type="match status" value="1"/>
</dbReference>
<dbReference type="Gene3D" id="3.40.1630.10">
    <property type="entry name" value="YhiQ-like domain"/>
    <property type="match status" value="1"/>
</dbReference>
<dbReference type="HAMAP" id="MF_01523">
    <property type="entry name" value="16SrRNA_methyltr_J"/>
    <property type="match status" value="1"/>
</dbReference>
<dbReference type="InterPro" id="IPR007536">
    <property type="entry name" value="16SrRNA_methylTrfase_J"/>
</dbReference>
<dbReference type="InterPro" id="IPR029063">
    <property type="entry name" value="SAM-dependent_MTases_sf"/>
</dbReference>
<dbReference type="NCBIfam" id="NF008012">
    <property type="entry name" value="PRK10742.1"/>
    <property type="match status" value="1"/>
</dbReference>
<dbReference type="PANTHER" id="PTHR36112">
    <property type="entry name" value="RIBOSOMAL RNA SMALL SUBUNIT METHYLTRANSFERASE J"/>
    <property type="match status" value="1"/>
</dbReference>
<dbReference type="PANTHER" id="PTHR36112:SF1">
    <property type="entry name" value="RIBOSOMAL RNA SMALL SUBUNIT METHYLTRANSFERASE J"/>
    <property type="match status" value="1"/>
</dbReference>
<dbReference type="Pfam" id="PF04445">
    <property type="entry name" value="SAM_MT"/>
    <property type="match status" value="1"/>
</dbReference>
<dbReference type="SUPFAM" id="SSF53335">
    <property type="entry name" value="S-adenosyl-L-methionine-dependent methyltransferases"/>
    <property type="match status" value="1"/>
</dbReference>